<protein>
    <recommendedName>
        <fullName>Glyceraldehyde-3-phosphate dehydrogenase</fullName>
        <shortName>GAPDH</shortName>
        <ecNumber evidence="1">1.2.1.12</ecNumber>
    </recommendedName>
    <alternativeName>
        <fullName evidence="9">Peptidyl-cysteine S-nitrosylase GAPDH</fullName>
        <ecNumber evidence="11">2.6.99.-</ecNumber>
    </alternativeName>
</protein>
<dbReference type="EC" id="1.2.1.12" evidence="1"/>
<dbReference type="EC" id="2.6.99.-" evidence="11"/>
<dbReference type="EMBL" id="L23961">
    <property type="protein sequence ID" value="AAA85218.1"/>
    <property type="molecule type" value="mRNA"/>
</dbReference>
<dbReference type="EMBL" id="V00884">
    <property type="protein sequence ID" value="CAA24253.1"/>
    <property type="molecule type" value="mRNA"/>
</dbReference>
<dbReference type="EMBL" id="AB231852">
    <property type="protein sequence ID" value="BAE19661.1"/>
    <property type="molecule type" value="mRNA"/>
</dbReference>
<dbReference type="PIR" id="JC4309">
    <property type="entry name" value="JC4309"/>
</dbReference>
<dbReference type="RefSeq" id="NP_001075722.1">
    <property type="nucleotide sequence ID" value="NM_001082253.1"/>
</dbReference>
<dbReference type="PDB" id="1J0X">
    <property type="method" value="X-ray"/>
    <property type="resolution" value="2.40 A"/>
    <property type="chains" value="O/P/Q/R=2-333"/>
</dbReference>
<dbReference type="PDBsum" id="1J0X"/>
<dbReference type="SMR" id="P46406"/>
<dbReference type="BioGRID" id="1172097">
    <property type="interactions" value="2"/>
</dbReference>
<dbReference type="DIP" id="DIP-6005N"/>
<dbReference type="FunCoup" id="P46406">
    <property type="interactions" value="980"/>
</dbReference>
<dbReference type="IntAct" id="P46406">
    <property type="interactions" value="4"/>
</dbReference>
<dbReference type="MINT" id="P46406"/>
<dbReference type="STRING" id="9986.ENSOCUP00000044112"/>
<dbReference type="BindingDB" id="P46406"/>
<dbReference type="ChEMBL" id="CHEMBL1075199"/>
<dbReference type="Allergome" id="12131">
    <property type="allergen name" value="Ory c GAPDH"/>
</dbReference>
<dbReference type="MoonProt" id="P46406"/>
<dbReference type="CarbonylDB" id="P46406"/>
<dbReference type="SwissPalm" id="P46406"/>
<dbReference type="PaxDb" id="9986-ENSOCUP00000017094"/>
<dbReference type="GeneID" id="100009074"/>
<dbReference type="KEGG" id="ocu:100009074"/>
<dbReference type="CTD" id="2597"/>
<dbReference type="eggNOG" id="KOG0657">
    <property type="taxonomic scope" value="Eukaryota"/>
</dbReference>
<dbReference type="InParanoid" id="P46406"/>
<dbReference type="OrthoDB" id="9553738at2759"/>
<dbReference type="BRENDA" id="1.2.1.12">
    <property type="organism ID" value="1749"/>
</dbReference>
<dbReference type="SABIO-RK" id="P46406"/>
<dbReference type="UniPathway" id="UPA00109">
    <property type="reaction ID" value="UER00184"/>
</dbReference>
<dbReference type="EvolutionaryTrace" id="P46406"/>
<dbReference type="PRO" id="PR:P46406"/>
<dbReference type="Proteomes" id="UP000001811">
    <property type="component" value="Unplaced"/>
</dbReference>
<dbReference type="GO" id="GO:0005737">
    <property type="term" value="C:cytoplasm"/>
    <property type="evidence" value="ECO:0000250"/>
    <property type="project" value="UniProtKB"/>
</dbReference>
<dbReference type="GO" id="GO:0005829">
    <property type="term" value="C:cytosol"/>
    <property type="evidence" value="ECO:0000250"/>
    <property type="project" value="UniProtKB"/>
</dbReference>
<dbReference type="GO" id="GO:0097452">
    <property type="term" value="C:GAIT complex"/>
    <property type="evidence" value="ECO:0000250"/>
    <property type="project" value="UniProtKB"/>
</dbReference>
<dbReference type="GO" id="GO:0015630">
    <property type="term" value="C:microtubule cytoskeleton"/>
    <property type="evidence" value="ECO:0000250"/>
    <property type="project" value="UniProtKB"/>
</dbReference>
<dbReference type="GO" id="GO:0005634">
    <property type="term" value="C:nucleus"/>
    <property type="evidence" value="ECO:0000250"/>
    <property type="project" value="UniProtKB"/>
</dbReference>
<dbReference type="GO" id="GO:0004365">
    <property type="term" value="F:glyceraldehyde-3-phosphate dehydrogenase (NAD+) (phosphorylating) activity"/>
    <property type="evidence" value="ECO:0000250"/>
    <property type="project" value="UniProtKB"/>
</dbReference>
<dbReference type="GO" id="GO:0008017">
    <property type="term" value="F:microtubule binding"/>
    <property type="evidence" value="ECO:0000250"/>
    <property type="project" value="UniProtKB"/>
</dbReference>
<dbReference type="GO" id="GO:0051287">
    <property type="term" value="F:NAD binding"/>
    <property type="evidence" value="ECO:0007669"/>
    <property type="project" value="InterPro"/>
</dbReference>
<dbReference type="GO" id="GO:0050661">
    <property type="term" value="F:NADP binding"/>
    <property type="evidence" value="ECO:0007669"/>
    <property type="project" value="InterPro"/>
</dbReference>
<dbReference type="GO" id="GO:0035605">
    <property type="term" value="F:peptidyl-cysteine S-nitrosylase activity"/>
    <property type="evidence" value="ECO:0000250"/>
    <property type="project" value="UniProtKB"/>
</dbReference>
<dbReference type="GO" id="GO:0006006">
    <property type="term" value="P:glucose metabolic process"/>
    <property type="evidence" value="ECO:0007669"/>
    <property type="project" value="InterPro"/>
</dbReference>
<dbReference type="GO" id="GO:0006096">
    <property type="term" value="P:glycolytic process"/>
    <property type="evidence" value="ECO:0007669"/>
    <property type="project" value="UniProtKB-UniPathway"/>
</dbReference>
<dbReference type="GO" id="GO:0045087">
    <property type="term" value="P:innate immune response"/>
    <property type="evidence" value="ECO:0007669"/>
    <property type="project" value="UniProtKB-KW"/>
</dbReference>
<dbReference type="GO" id="GO:0000226">
    <property type="term" value="P:microtubule cytoskeleton organization"/>
    <property type="evidence" value="ECO:0000250"/>
    <property type="project" value="UniProtKB"/>
</dbReference>
<dbReference type="GO" id="GO:0051402">
    <property type="term" value="P:neuron apoptotic process"/>
    <property type="evidence" value="ECO:0000250"/>
    <property type="project" value="UniProtKB"/>
</dbReference>
<dbReference type="GO" id="GO:0035606">
    <property type="term" value="P:peptidyl-cysteine S-trans-nitrosylation"/>
    <property type="evidence" value="ECO:0000250"/>
    <property type="project" value="UniProtKB"/>
</dbReference>
<dbReference type="GO" id="GO:0043123">
    <property type="term" value="P:positive regulation of canonical NF-kappaB signal transduction"/>
    <property type="evidence" value="ECO:0000250"/>
    <property type="project" value="UniProtKB"/>
</dbReference>
<dbReference type="GO" id="GO:0032481">
    <property type="term" value="P:positive regulation of type I interferon production"/>
    <property type="evidence" value="ECO:0000250"/>
    <property type="project" value="UniProtKB"/>
</dbReference>
<dbReference type="GO" id="GO:0050821">
    <property type="term" value="P:protein stabilization"/>
    <property type="evidence" value="ECO:0000250"/>
    <property type="project" value="UniProtKB"/>
</dbReference>
<dbReference type="GO" id="GO:0006417">
    <property type="term" value="P:regulation of translation"/>
    <property type="evidence" value="ECO:0007669"/>
    <property type="project" value="UniProtKB-KW"/>
</dbReference>
<dbReference type="CDD" id="cd18126">
    <property type="entry name" value="GAPDH_I_C"/>
    <property type="match status" value="1"/>
</dbReference>
<dbReference type="CDD" id="cd05214">
    <property type="entry name" value="GAPDH_I_N"/>
    <property type="match status" value="1"/>
</dbReference>
<dbReference type="FunFam" id="3.30.360.10:FF:000001">
    <property type="entry name" value="Glyceraldehyde-3-phosphate dehydrogenase"/>
    <property type="match status" value="1"/>
</dbReference>
<dbReference type="FunFam" id="3.40.50.720:FF:001161">
    <property type="entry name" value="Glyceraldehyde-3-phosphate dehydrogenase"/>
    <property type="match status" value="1"/>
</dbReference>
<dbReference type="Gene3D" id="3.30.360.10">
    <property type="entry name" value="Dihydrodipicolinate Reductase, domain 2"/>
    <property type="match status" value="1"/>
</dbReference>
<dbReference type="Gene3D" id="3.40.50.720">
    <property type="entry name" value="NAD(P)-binding Rossmann-like Domain"/>
    <property type="match status" value="1"/>
</dbReference>
<dbReference type="InterPro" id="IPR020831">
    <property type="entry name" value="GlycerAld/Erythrose_P_DH"/>
</dbReference>
<dbReference type="InterPro" id="IPR020830">
    <property type="entry name" value="GlycerAld_3-P_DH_AS"/>
</dbReference>
<dbReference type="InterPro" id="IPR020829">
    <property type="entry name" value="GlycerAld_3-P_DH_cat"/>
</dbReference>
<dbReference type="InterPro" id="IPR020828">
    <property type="entry name" value="GlycerAld_3-P_DH_NAD(P)-bd"/>
</dbReference>
<dbReference type="InterPro" id="IPR006424">
    <property type="entry name" value="Glyceraldehyde-3-P_DH_1"/>
</dbReference>
<dbReference type="InterPro" id="IPR036291">
    <property type="entry name" value="NAD(P)-bd_dom_sf"/>
</dbReference>
<dbReference type="NCBIfam" id="TIGR01534">
    <property type="entry name" value="GAPDH-I"/>
    <property type="match status" value="1"/>
</dbReference>
<dbReference type="PANTHER" id="PTHR10836">
    <property type="entry name" value="GLYCERALDEHYDE 3-PHOSPHATE DEHYDROGENASE"/>
    <property type="match status" value="1"/>
</dbReference>
<dbReference type="PANTHER" id="PTHR10836:SF111">
    <property type="entry name" value="GLYCERALDEHYDE-3-PHOSPHATE DEHYDROGENASE"/>
    <property type="match status" value="1"/>
</dbReference>
<dbReference type="Pfam" id="PF02800">
    <property type="entry name" value="Gp_dh_C"/>
    <property type="match status" value="1"/>
</dbReference>
<dbReference type="Pfam" id="PF00044">
    <property type="entry name" value="Gp_dh_N"/>
    <property type="match status" value="1"/>
</dbReference>
<dbReference type="PIRSF" id="PIRSF000149">
    <property type="entry name" value="GAP_DH"/>
    <property type="match status" value="1"/>
</dbReference>
<dbReference type="PRINTS" id="PR00078">
    <property type="entry name" value="G3PDHDRGNASE"/>
</dbReference>
<dbReference type="SMART" id="SM00846">
    <property type="entry name" value="Gp_dh_N"/>
    <property type="match status" value="1"/>
</dbReference>
<dbReference type="SUPFAM" id="SSF55347">
    <property type="entry name" value="Glyceraldehyde-3-phosphate dehydrogenase-like, C-terminal domain"/>
    <property type="match status" value="1"/>
</dbReference>
<dbReference type="SUPFAM" id="SSF51735">
    <property type="entry name" value="NAD(P)-binding Rossmann-fold domains"/>
    <property type="match status" value="1"/>
</dbReference>
<dbReference type="PROSITE" id="PS00071">
    <property type="entry name" value="GAPDH"/>
    <property type="match status" value="1"/>
</dbReference>
<evidence type="ECO:0000250" key="1">
    <source>
        <dbReference type="UniProtKB" id="P04406"/>
    </source>
</evidence>
<evidence type="ECO:0000250" key="2">
    <source>
        <dbReference type="UniProtKB" id="P04797"/>
    </source>
</evidence>
<evidence type="ECO:0000250" key="3">
    <source>
        <dbReference type="UniProtKB" id="P10096"/>
    </source>
</evidence>
<evidence type="ECO:0000250" key="4">
    <source>
        <dbReference type="UniProtKB" id="P16858"/>
    </source>
</evidence>
<evidence type="ECO:0000250" key="5">
    <source>
        <dbReference type="UniProtKB" id="P22513"/>
    </source>
</evidence>
<evidence type="ECO:0000255" key="6">
    <source>
        <dbReference type="PROSITE-ProRule" id="PRU10009"/>
    </source>
</evidence>
<evidence type="ECO:0000269" key="7">
    <source>
    </source>
</evidence>
<evidence type="ECO:0000269" key="8">
    <source>
    </source>
</evidence>
<evidence type="ECO:0000305" key="9"/>
<evidence type="ECO:0000305" key="10">
    <source>
    </source>
</evidence>
<evidence type="ECO:0000305" key="11">
    <source>
    </source>
</evidence>
<evidence type="ECO:0007829" key="12">
    <source>
        <dbReference type="PDB" id="1J0X"/>
    </source>
</evidence>
<sequence>MVKVGVNGFGRIGRLVTRAAFNSGKVDVVAINDPFIDLHYMVYMFQYDSTHGKFHGTVKAENGKLVINGKAITIFQERDPANIKWGDAGAEYVVESTGVFTTMEKAGAHLKGGAKRVIISAPSADAPMFVMGVNHEKYDNSLKIVSNASCTTNCLAPLAKVIHDHFGIVEGLMTTVHAITATQKTVDGPSGKLWRDGRGAAQNIIPASTGAAKAVGKVIPELNGKLTGMAFRVPTPNVSVVDLTCRLEKAAKYDDIKKVVKQASEGPLKGILGYTEDQVVSCDFNSATHSSTFDAGAGIALNDHFVKLISWYDNEFGYSNRVVDLMVHMASKE</sequence>
<organism>
    <name type="scientific">Oryctolagus cuniculus</name>
    <name type="common">Rabbit</name>
    <dbReference type="NCBI Taxonomy" id="9986"/>
    <lineage>
        <taxon>Eukaryota</taxon>
        <taxon>Metazoa</taxon>
        <taxon>Chordata</taxon>
        <taxon>Craniata</taxon>
        <taxon>Vertebrata</taxon>
        <taxon>Euteleostomi</taxon>
        <taxon>Mammalia</taxon>
        <taxon>Eutheria</taxon>
        <taxon>Euarchontoglires</taxon>
        <taxon>Glires</taxon>
        <taxon>Lagomorpha</taxon>
        <taxon>Leporidae</taxon>
        <taxon>Oryctolagus</taxon>
    </lineage>
</organism>
<name>G3P_RABIT</name>
<gene>
    <name type="primary">GAPDH</name>
    <name type="synonym">GAPD</name>
</gene>
<feature type="chain" id="PRO_0000145493" description="Glyceraldehyde-3-phosphate dehydrogenase">
    <location>
        <begin position="1"/>
        <end position="333"/>
    </location>
</feature>
<feature type="region of interest" description="Interaction with WARS1" evidence="1">
    <location>
        <begin position="1"/>
        <end position="146"/>
    </location>
</feature>
<feature type="short sequence motif" description="[IL]-x-C-x-x-[DE] motif" evidence="1">
    <location>
        <begin position="243"/>
        <end position="248"/>
    </location>
</feature>
<feature type="active site" description="Nucleophile">
    <location>
        <position position="150"/>
    </location>
</feature>
<feature type="binding site" evidence="7">
    <location>
        <begin position="11"/>
        <end position="12"/>
    </location>
    <ligand>
        <name>NAD(+)</name>
        <dbReference type="ChEBI" id="CHEBI:57540"/>
    </ligand>
</feature>
<feature type="binding site" evidence="7">
    <location>
        <position position="33"/>
    </location>
    <ligand>
        <name>NAD(+)</name>
        <dbReference type="ChEBI" id="CHEBI:57540"/>
    </ligand>
</feature>
<feature type="binding site" evidence="7">
    <location>
        <position position="78"/>
    </location>
    <ligand>
        <name>NAD(+)</name>
        <dbReference type="ChEBI" id="CHEBI:57540"/>
    </ligand>
</feature>
<feature type="binding site" evidence="1">
    <location>
        <position position="120"/>
    </location>
    <ligand>
        <name>NAD(+)</name>
        <dbReference type="ChEBI" id="CHEBI:57540"/>
    </ligand>
</feature>
<feature type="binding site" evidence="5">
    <location>
        <begin position="149"/>
        <end position="151"/>
    </location>
    <ligand>
        <name>D-glyceraldehyde 3-phosphate</name>
        <dbReference type="ChEBI" id="CHEBI:59776"/>
    </ligand>
</feature>
<feature type="binding site" evidence="5">
    <location>
        <position position="180"/>
    </location>
    <ligand>
        <name>D-glyceraldehyde 3-phosphate</name>
        <dbReference type="ChEBI" id="CHEBI:59776"/>
    </ligand>
</feature>
<feature type="binding site" evidence="5">
    <location>
        <begin position="209"/>
        <end position="210"/>
    </location>
    <ligand>
        <name>D-glyceraldehyde 3-phosphate</name>
        <dbReference type="ChEBI" id="CHEBI:59776"/>
    </ligand>
</feature>
<feature type="binding site" evidence="5">
    <location>
        <position position="232"/>
    </location>
    <ligand>
        <name>D-glyceraldehyde 3-phosphate</name>
        <dbReference type="ChEBI" id="CHEBI:59776"/>
    </ligand>
</feature>
<feature type="binding site" evidence="7">
    <location>
        <position position="314"/>
    </location>
    <ligand>
        <name>NAD(+)</name>
        <dbReference type="ChEBI" id="CHEBI:57540"/>
    </ligand>
</feature>
<feature type="site" description="Activates thiol group during catalysis" evidence="10">
    <location>
        <position position="177"/>
    </location>
</feature>
<feature type="modified residue" description="N6,N6-dimethyllysine" evidence="1">
    <location>
        <position position="3"/>
    </location>
</feature>
<feature type="modified residue" description="Deamidated asparagine" evidence="1">
    <location>
        <position position="7"/>
    </location>
</feature>
<feature type="modified residue" description="Phosphotyrosine" evidence="1">
    <location>
        <position position="40"/>
    </location>
</feature>
<feature type="modified residue" description="N6-acetyllysine" evidence="1">
    <location>
        <position position="59"/>
    </location>
</feature>
<feature type="modified residue" description="Deamidated asparagine" evidence="1">
    <location>
        <position position="62"/>
    </location>
</feature>
<feature type="modified residue" description="N6,N6-dimethyllysine" evidence="1">
    <location>
        <position position="64"/>
    </location>
</feature>
<feature type="modified residue" description="Deamidated asparagine" evidence="1">
    <location>
        <position position="68"/>
    </location>
</feature>
<feature type="modified residue" description="Phosphothreonine" evidence="1">
    <location>
        <position position="73"/>
    </location>
</feature>
<feature type="modified residue" description="Phosphoserine" evidence="1">
    <location>
        <position position="120"/>
    </location>
</feature>
<feature type="modified residue" description="Phosphoserine" evidence="1">
    <location>
        <position position="146"/>
    </location>
</feature>
<feature type="modified residue" description="Deamidated asparagine" evidence="1">
    <location>
        <position position="147"/>
    </location>
</feature>
<feature type="modified residue" description="Phosphoserine" evidence="1">
    <location>
        <position position="149"/>
    </location>
</feature>
<feature type="modified residue" description="ADP-ribosylcysteine; by autocatalysis; in irreversibly inhibited form" evidence="2">
    <location>
        <position position="150"/>
    </location>
</feature>
<feature type="modified residue" description="Cysteine persulfide" evidence="4">
    <location>
        <position position="150"/>
    </location>
</feature>
<feature type="modified residue" description="S-(2-succinyl)cysteine" evidence="8">
    <location>
        <position position="150"/>
    </location>
</feature>
<feature type="modified residue" description="S-nitrosocysteine; in reversibly inhibited form" evidence="2">
    <location>
        <position position="150"/>
    </location>
</feature>
<feature type="modified residue" description="Phosphothreonine" evidence="1">
    <location>
        <position position="151"/>
    </location>
</feature>
<feature type="modified residue" description="Deamidated asparagine" evidence="1">
    <location>
        <position position="153"/>
    </location>
</feature>
<feature type="modified residue" description="Phosphothreonine" evidence="1">
    <location>
        <position position="175"/>
    </location>
</feature>
<feature type="modified residue" description="Phosphothreonine" evidence="1">
    <location>
        <position position="180"/>
    </location>
</feature>
<feature type="modified residue" description="Phosphothreonine" evidence="1">
    <location>
        <position position="182"/>
    </location>
</feature>
<feature type="modified residue" description="N6,N6-dimethyllysine; alternate" evidence="1">
    <location>
        <position position="192"/>
    </location>
</feature>
<feature type="modified residue" description="N6-acetyllysine; alternate" evidence="1">
    <location>
        <position position="192"/>
    </location>
</feature>
<feature type="modified residue" description="N6-malonyllysine; alternate" evidence="1">
    <location>
        <position position="192"/>
    </location>
</feature>
<feature type="modified residue" description="Phosphothreonine" evidence="1">
    <location>
        <position position="209"/>
    </location>
</feature>
<feature type="modified residue" description="N6,N6-dimethyllysine; alternate" evidence="1">
    <location>
        <position position="213"/>
    </location>
</feature>
<feature type="modified residue" description="N6-malonyllysine; alternate" evidence="1">
    <location>
        <position position="213"/>
    </location>
</feature>
<feature type="modified residue" description="N6-acetyllysine" evidence="1">
    <location>
        <position position="217"/>
    </location>
</feature>
<feature type="modified residue" description="Deamidated asparagine" evidence="1">
    <location>
        <position position="223"/>
    </location>
</feature>
<feature type="modified residue" description="N6,N6-dimethyllysine; alternate" evidence="1">
    <location>
        <position position="225"/>
    </location>
</feature>
<feature type="modified residue" description="N6-acetyllysine; alternate" evidence="1">
    <location>
        <position position="225"/>
    </location>
</feature>
<feature type="modified residue" description="Phosphothreonine" evidence="1">
    <location>
        <position position="227"/>
    </location>
</feature>
<feature type="modified residue" description="Phosphothreonine" evidence="1">
    <location>
        <position position="235"/>
    </location>
</feature>
<feature type="modified residue" description="Phosphoserine" evidence="1">
    <location>
        <position position="239"/>
    </location>
</feature>
<feature type="modified residue" description="S-(2-succinyl)cysteine" evidence="8">
    <location>
        <position position="245"/>
    </location>
</feature>
<feature type="modified residue" description="S-nitrosocysteine" evidence="1">
    <location>
        <position position="245"/>
    </location>
</feature>
<feature type="modified residue" description="N6-acetyllysine" evidence="1">
    <location>
        <position position="252"/>
    </location>
</feature>
<feature type="modified residue" description="N6,N6-dimethyllysine" evidence="1">
    <location>
        <position position="258"/>
    </location>
</feature>
<feature type="modified residue" description="N6,N6-dimethyllysine" evidence="1">
    <location>
        <position position="261"/>
    </location>
</feature>
<feature type="modified residue" description="Phosphoserine" evidence="1">
    <location>
        <position position="310"/>
    </location>
</feature>
<feature type="modified residue" description="Deamidated asparagine" evidence="1">
    <location>
        <position position="314"/>
    </location>
</feature>
<feature type="modified residue" description="Phosphoserine" evidence="1">
    <location>
        <position position="331"/>
    </location>
</feature>
<feature type="modified residue" description="N6,N6-dimethyllysine" evidence="1">
    <location>
        <position position="332"/>
    </location>
</feature>
<feature type="cross-link" description="Glycyl lysine isopeptide (Lys-Gly) (interchain with G-Cter in SUMO2)" evidence="1">
    <location>
        <position position="184"/>
    </location>
</feature>
<feature type="strand" evidence="12">
    <location>
        <begin position="3"/>
        <end position="7"/>
    </location>
</feature>
<feature type="helix" evidence="12">
    <location>
        <begin position="11"/>
        <end position="23"/>
    </location>
</feature>
<feature type="strand" evidence="12">
    <location>
        <begin position="25"/>
        <end position="32"/>
    </location>
</feature>
<feature type="strand" evidence="12">
    <location>
        <begin position="34"/>
        <end position="36"/>
    </location>
</feature>
<feature type="helix" evidence="12">
    <location>
        <begin position="38"/>
        <end position="46"/>
    </location>
</feature>
<feature type="turn" evidence="12">
    <location>
        <begin position="49"/>
        <end position="51"/>
    </location>
</feature>
<feature type="strand" evidence="12">
    <location>
        <begin position="58"/>
        <end position="61"/>
    </location>
</feature>
<feature type="strand" evidence="12">
    <location>
        <begin position="64"/>
        <end position="67"/>
    </location>
</feature>
<feature type="strand" evidence="12">
    <location>
        <begin position="70"/>
        <end position="75"/>
    </location>
</feature>
<feature type="helix" evidence="12">
    <location>
        <begin position="80"/>
        <end position="82"/>
    </location>
</feature>
<feature type="helix" evidence="12">
    <location>
        <begin position="85"/>
        <end position="88"/>
    </location>
</feature>
<feature type="strand" evidence="12">
    <location>
        <begin position="91"/>
        <end position="95"/>
    </location>
</feature>
<feature type="strand" evidence="12">
    <location>
        <begin position="97"/>
        <end position="99"/>
    </location>
</feature>
<feature type="helix" evidence="12">
    <location>
        <begin position="103"/>
        <end position="107"/>
    </location>
</feature>
<feature type="helix" evidence="12">
    <location>
        <begin position="108"/>
        <end position="112"/>
    </location>
</feature>
<feature type="strand" evidence="12">
    <location>
        <begin position="115"/>
        <end position="121"/>
    </location>
</feature>
<feature type="strand" evidence="12">
    <location>
        <begin position="124"/>
        <end position="126"/>
    </location>
</feature>
<feature type="turn" evidence="12">
    <location>
        <begin position="131"/>
        <end position="133"/>
    </location>
</feature>
<feature type="helix" evidence="12">
    <location>
        <begin position="135"/>
        <end position="137"/>
    </location>
</feature>
<feature type="strand" evidence="12">
    <location>
        <begin position="143"/>
        <end position="146"/>
    </location>
</feature>
<feature type="helix" evidence="12">
    <location>
        <begin position="150"/>
        <end position="166"/>
    </location>
</feature>
<feature type="strand" evidence="12">
    <location>
        <begin position="168"/>
        <end position="178"/>
    </location>
</feature>
<feature type="strand" evidence="12">
    <location>
        <begin position="183"/>
        <end position="187"/>
    </location>
</feature>
<feature type="helix" evidence="12">
    <location>
        <begin position="194"/>
        <end position="197"/>
    </location>
</feature>
<feature type="turn" evidence="12">
    <location>
        <begin position="200"/>
        <end position="202"/>
    </location>
</feature>
<feature type="strand" evidence="12">
    <location>
        <begin position="205"/>
        <end position="208"/>
    </location>
</feature>
<feature type="helix" evidence="12">
    <location>
        <begin position="211"/>
        <end position="218"/>
    </location>
</feature>
<feature type="helix" evidence="12">
    <location>
        <begin position="220"/>
        <end position="222"/>
    </location>
</feature>
<feature type="strand" evidence="12">
    <location>
        <begin position="225"/>
        <end position="234"/>
    </location>
</feature>
<feature type="strand" evidence="12">
    <location>
        <begin position="239"/>
        <end position="249"/>
    </location>
</feature>
<feature type="helix" evidence="12">
    <location>
        <begin position="253"/>
        <end position="265"/>
    </location>
</feature>
<feature type="turn" evidence="12">
    <location>
        <begin position="266"/>
        <end position="271"/>
    </location>
</feature>
<feature type="strand" evidence="12">
    <location>
        <begin position="272"/>
        <end position="275"/>
    </location>
</feature>
<feature type="helix" evidence="12">
    <location>
        <begin position="281"/>
        <end position="284"/>
    </location>
</feature>
<feature type="strand" evidence="12">
    <location>
        <begin position="290"/>
        <end position="294"/>
    </location>
</feature>
<feature type="turn" evidence="12">
    <location>
        <begin position="295"/>
        <end position="297"/>
    </location>
</feature>
<feature type="strand" evidence="12">
    <location>
        <begin position="299"/>
        <end position="302"/>
    </location>
</feature>
<feature type="strand" evidence="12">
    <location>
        <begin position="305"/>
        <end position="312"/>
    </location>
</feature>
<feature type="helix" evidence="12">
    <location>
        <begin position="316"/>
        <end position="330"/>
    </location>
</feature>
<accession>P46406</accession>
<accession>Q4AC92</accession>
<reference key="1">
    <citation type="journal article" date="1995" name="Gene">
        <title>Sequence of the rabbit glyceraldehyde-3-phosphate dehydrogenase-encoding cDNA.</title>
        <authorList>
            <person name="Applequist S.E."/>
            <person name="Keyna U."/>
            <person name="Calvin M.R."/>
            <person name="Beck-Engeser G.B."/>
            <person name="Raman C."/>
            <person name="Jaeck H.-M."/>
        </authorList>
    </citation>
    <scope>NUCLEOTIDE SEQUENCE [MRNA]</scope>
    <source>
        <tissue>Spleen</tissue>
    </source>
</reference>
<reference key="2">
    <citation type="journal article" date="1983" name="Nature">
        <title>A new troponin T and cDNA clones for 13 different muscle proteins, found by shotgun sequencing.</title>
        <authorList>
            <person name="Putney S.D."/>
            <person name="Herlihy W.C."/>
            <person name="Schimmel P.R."/>
        </authorList>
    </citation>
    <scope>NUCLEOTIDE SEQUENCE [MRNA] OF 33-79</scope>
</reference>
<reference key="3">
    <citation type="journal article" date="2006" name="Stem Cells">
        <title>Limbal epithelial side-population cells have stem cell-like properties, including quiescent state.</title>
        <authorList>
            <person name="Umemoto T."/>
            <person name="Yamato M."/>
            <person name="Nishida K."/>
            <person name="Yang J."/>
            <person name="Tano Y."/>
            <person name="Okano T."/>
        </authorList>
    </citation>
    <scope>NUCLEOTIDE SEQUENCE [MRNA] OF 107-267</scope>
</reference>
<reference key="4">
    <citation type="journal article" date="2008" name="Diabetes">
        <title>Inactivation of glyceraldehyde-3-phosphate dehydrogenase by fumarate in diabetes: formation of S-(2-succinyl)cysteine, a novel chemical modification of protein and possible biomarker of mitochondrial stress.</title>
        <authorList>
            <person name="Blatnik M."/>
            <person name="Frizzell N."/>
            <person name="Thorpe S.R."/>
            <person name="Baynes J.W."/>
        </authorList>
    </citation>
    <scope>SUCCINATION AT CYS-150 AND CYS-245</scope>
    <scope>ACTIVITY REGULATION</scope>
</reference>
<reference key="5">
    <citation type="journal article" date="2003" name="Acta Crystallogr. D">
        <title>Structure of rabbit-muscle glyceraldehyde-3-phosphate dehydrogenase.</title>
        <authorList>
            <person name="Cowan-Jacob S.W."/>
            <person name="Kaufmann M."/>
            <person name="Anselmo A.N."/>
            <person name="Stark W."/>
            <person name="Gruetter M.G."/>
        </authorList>
    </citation>
    <scope>X-RAY CRYSTALLOGRAPHY (2.4 ANGSTROMS) IN COMPLEX WITH NAD</scope>
    <scope>SUBUNIT</scope>
</reference>
<keyword id="KW-0002">3D-structure</keyword>
<keyword id="KW-0007">Acetylation</keyword>
<keyword id="KW-0013">ADP-ribosylation</keyword>
<keyword id="KW-0053">Apoptosis</keyword>
<keyword id="KW-0963">Cytoplasm</keyword>
<keyword id="KW-0206">Cytoskeleton</keyword>
<keyword id="KW-0324">Glycolysis</keyword>
<keyword id="KW-0391">Immunity</keyword>
<keyword id="KW-0399">Innate immunity</keyword>
<keyword id="KW-1017">Isopeptide bond</keyword>
<keyword id="KW-0488">Methylation</keyword>
<keyword id="KW-0520">NAD</keyword>
<keyword id="KW-0539">Nucleus</keyword>
<keyword id="KW-0560">Oxidoreductase</keyword>
<keyword id="KW-0597">Phosphoprotein</keyword>
<keyword id="KW-1185">Reference proteome</keyword>
<keyword id="KW-0702">S-nitrosylation</keyword>
<keyword id="KW-0808">Transferase</keyword>
<keyword id="KW-0810">Translation regulation</keyword>
<keyword id="KW-0832">Ubl conjugation</keyword>
<proteinExistence type="evidence at protein level"/>
<comment type="function">
    <text evidence="1 2">Has both glyceraldehyde-3-phosphate dehydrogenase and nitrosylase activities, thereby playing a role in glycolysis and nuclear functions, respectively. Glyceraldehyde-3-phosphate dehydrogenase is a key enzyme in glycolysis that catalyzes the first step of the pathway by converting D-glyceraldehyde 3-phosphate (G3P) into 3-phospho-D-glyceroyl phosphate (By similarity). Modulates the organization and assembly of the cytoskeleton. Facilitates the CHP1-dependent microtubule and membrane associations through its ability to stimulate the binding of CHP1 to microtubules (By similarity). Component of the GAIT (gamma interferon-activated inhibitor of translation) complex which mediates interferon-gamma-induced transcript-selective translation inhibition in inflammation processes. Upon interferon-gamma treatment assembles into the GAIT complex which binds to stem loop-containing GAIT elements in the 3'-UTR of diverse inflammatory mRNAs (such as ceruplasmin) and suppresses their translation. Also plays a role in innate immunity by promoting TNF-induced NF-kappa-B activation and type I interferon production, via interaction with TRAF2 and TRAF3, respectively (By similarity). Participates in nuclear events including transcription, RNA transport, DNA replication and apoptosis. Nuclear functions are probably due to the nitrosylase activity that mediates cysteine S-nitrosylation of nuclear target proteins such as SIRT1, HDAC2 and PRKDC (By similarity).</text>
</comment>
<comment type="catalytic activity">
    <reaction evidence="6 11">
        <text>D-glyceraldehyde 3-phosphate + phosphate + NAD(+) = (2R)-3-phospho-glyceroyl phosphate + NADH + H(+)</text>
        <dbReference type="Rhea" id="RHEA:10300"/>
        <dbReference type="ChEBI" id="CHEBI:15378"/>
        <dbReference type="ChEBI" id="CHEBI:43474"/>
        <dbReference type="ChEBI" id="CHEBI:57540"/>
        <dbReference type="ChEBI" id="CHEBI:57604"/>
        <dbReference type="ChEBI" id="CHEBI:57945"/>
        <dbReference type="ChEBI" id="CHEBI:59776"/>
        <dbReference type="EC" id="1.2.1.12"/>
    </reaction>
</comment>
<comment type="catalytic activity">
    <reaction evidence="2">
        <text>S-nitroso-L-cysteinyl-[GAPDH] + L-cysteinyl-[protein] = L-cysteinyl-[GAPDH] + S-nitroso-L-cysteinyl-[protein]</text>
        <dbReference type="Rhea" id="RHEA:66684"/>
        <dbReference type="Rhea" id="RHEA-COMP:10131"/>
        <dbReference type="Rhea" id="RHEA-COMP:17089"/>
        <dbReference type="Rhea" id="RHEA-COMP:17090"/>
        <dbReference type="Rhea" id="RHEA-COMP:17091"/>
        <dbReference type="ChEBI" id="CHEBI:29950"/>
        <dbReference type="ChEBI" id="CHEBI:149494"/>
    </reaction>
    <physiologicalReaction direction="left-to-right" evidence="2">
        <dbReference type="Rhea" id="RHEA:66685"/>
    </physiologicalReaction>
</comment>
<comment type="activity regulation">
    <text evidence="8">Glyceraldehyde-3-phosphate dehydrogenase activity is inhibited by fumarate, via the formation of S-(2-succinyl)cysteine residues.</text>
</comment>
<comment type="pathway">
    <text>Carbohydrate degradation; glycolysis; pyruvate from D-glyceraldehyde 3-phosphate: step 1/5.</text>
</comment>
<comment type="subunit">
    <text evidence="1 2 3">Homotetramer (By similarity). Interacts with TPPP; the interaction is direct (By similarity). Interacts (when S-nitrosylated) with SIAH1; leading to nuclear translocation. Interacts with RILPL1/GOSPEL, leading to prevent the interaction between GAPDH and SIAH1 and prevent nuclear translocation. Interacts with CHP1; the interaction increases the binding of CHP1 with microtubules. Associates with microtubules (By similarity). Interacts with EIF1AD, USP25, PRKCI and WARS1. Interacts with phosphorylated RPL13A; inhibited by oxidatively-modified low-densitity lipoprotein (LDL(ox)). Component of the GAIT complex. Interacts with FKBP6; leading to inhibit GAPDH catalytic activity. Interacts with TRAF2, promoting TRAF2 ubiquitination. Interacts with TRAF3, promoting TRAF3 ubiquitination (By similarity).</text>
</comment>
<comment type="interaction">
    <interactant intactId="EBI-2750726">
        <id>P46406</id>
    </interactant>
    <interactant intactId="EBI-917838">
        <id>P61023</id>
        <label>Chp1</label>
    </interactant>
    <organismsDiffer>true</organismsDiffer>
    <experiments>2</experiments>
</comment>
<comment type="interaction">
    <interactant intactId="EBI-2750726">
        <id>P46406</id>
    </interactant>
    <interactant intactId="EBI-7576138">
        <id>P02730</id>
        <label>SLC4A1</label>
    </interactant>
    <organismsDiffer>true</organismsDiffer>
    <experiments>4</experiments>
</comment>
<comment type="subcellular location">
    <subcellularLocation>
        <location evidence="2">Cytoplasm</location>
        <location evidence="2">Cytosol</location>
    </subcellularLocation>
    <subcellularLocation>
        <location evidence="2">Cytoplasm</location>
        <location evidence="2">Cytoskeleton</location>
    </subcellularLocation>
    <subcellularLocation>
        <location evidence="2">Nucleus</location>
    </subcellularLocation>
    <text evidence="2">Translocates to the nucleus following S-nitrosylation and interaction with SIAH1, which contains a nuclear localization signal. Colocalizes with CHP1 to small punctate structures along the microtubules tracks.</text>
</comment>
<comment type="domain">
    <text evidence="1">The [IL]-x-C-x-x-[DE] motif is a proposed target motif for cysteine S-nitrosylation mediated by the iNOS-S100A8/A9 transnitrosylase complex.</text>
</comment>
<comment type="PTM">
    <text evidence="1">ISGylated.</text>
</comment>
<comment type="PTM">
    <text evidence="1 2">S-nitrosylation of Cys-150 leads to interaction with SIAH1, followed by translocation to the nucleus S-nitrosylation of Cys-245 is induced by interferon-gamma and LDL(ox) implicating the iNOS-S100A8/9 transnitrosylase complex and seems to prevent interaction with phosphorylated RPL13A and to interfere with GAIT complex activity (By similarity).</text>
</comment>
<comment type="PTM">
    <text evidence="4">Sulfhydration at Cys-150 increases catalytic activity.</text>
</comment>
<comment type="PTM">
    <text evidence="1">Oxidative stress can promote the formation of high molecular weight disulfide-linked GAPDH aggregates, through a process called nucleocytoplasmic coagulation.</text>
</comment>
<comment type="similarity">
    <text evidence="9">Belongs to the glyceraldehyde-3-phosphate dehydrogenase family.</text>
</comment>